<sequence>MKKIAILTSGGDASTMNKCLSTFITYASKYNCEVVFVKNGYKGIYDNEFVKPDYTETKSWWSLPGTKIYSSRFPEILDEQVRKQMVDNLHKNSIDTLVVIGGDGSYKGARLLSKSGIKVIGLPGTIDNDIASTSYSIGFDTSLNAIVNSIKEIKSCMDSHANVAMIEIMGRHCIDLTVFAGIATEADIIITPESFYTPQQLLAKINEKRKTNSRGIIILYVELLLGTENIPTVEEYIKYIQANSKESVKKNILGYLQRGGNPTAMDMIRASLMTEHALKMISENQYNKIIGVDEFKVVSYDLETAINMKNPSRKDLIDKFFN</sequence>
<accession>Q8EVH2</accession>
<feature type="chain" id="PRO_0000111964" description="Probable ATP-dependent 6-phosphofructokinase">
    <location>
        <begin position="1"/>
        <end position="322"/>
    </location>
</feature>
<feature type="active site" description="Proton acceptor" evidence="1">
    <location>
        <position position="127"/>
    </location>
</feature>
<feature type="binding site" evidence="1">
    <location>
        <position position="11"/>
    </location>
    <ligand>
        <name>ATP</name>
        <dbReference type="ChEBI" id="CHEBI:30616"/>
    </ligand>
</feature>
<feature type="binding site" evidence="1">
    <location>
        <begin position="72"/>
        <end position="73"/>
    </location>
    <ligand>
        <name>ATP</name>
        <dbReference type="ChEBI" id="CHEBI:30616"/>
    </ligand>
</feature>
<feature type="binding site" evidence="1">
    <location>
        <begin position="102"/>
        <end position="105"/>
    </location>
    <ligand>
        <name>ATP</name>
        <dbReference type="ChEBI" id="CHEBI:30616"/>
    </ligand>
</feature>
<feature type="binding site" evidence="1">
    <location>
        <position position="103"/>
    </location>
    <ligand>
        <name>Mg(2+)</name>
        <dbReference type="ChEBI" id="CHEBI:18420"/>
        <note>catalytic</note>
    </ligand>
</feature>
<feature type="binding site" description="in other chain" evidence="1">
    <location>
        <begin position="125"/>
        <end position="127"/>
    </location>
    <ligand>
        <name>substrate</name>
        <note>ligand shared between dimeric partners</note>
    </ligand>
</feature>
<feature type="binding site" description="in other chain" evidence="1">
    <location>
        <begin position="169"/>
        <end position="171"/>
    </location>
    <ligand>
        <name>substrate</name>
        <note>ligand shared between dimeric partners</note>
    </ligand>
</feature>
<feature type="binding site" description="in other chain" evidence="1">
    <location>
        <position position="222"/>
    </location>
    <ligand>
        <name>substrate</name>
        <note>ligand shared between dimeric partners</note>
    </ligand>
</feature>
<feature type="binding site" evidence="1">
    <location>
        <position position="249"/>
    </location>
    <ligand>
        <name>substrate</name>
        <note>ligand shared between dimeric partners</note>
    </ligand>
</feature>
<feature type="binding site" description="in other chain" evidence="1">
    <location>
        <begin position="255"/>
        <end position="258"/>
    </location>
    <ligand>
        <name>substrate</name>
        <note>ligand shared between dimeric partners</note>
    </ligand>
</feature>
<gene>
    <name type="primary">pfkA</name>
    <name type="ordered locus">MYPE5920</name>
</gene>
<organism>
    <name type="scientific">Malacoplasma penetrans (strain HF-2)</name>
    <name type="common">Mycoplasma penetrans</name>
    <dbReference type="NCBI Taxonomy" id="272633"/>
    <lineage>
        <taxon>Bacteria</taxon>
        <taxon>Bacillati</taxon>
        <taxon>Mycoplasmatota</taxon>
        <taxon>Mycoplasmoidales</taxon>
        <taxon>Mycoplasmoidaceae</taxon>
        <taxon>Malacoplasma</taxon>
    </lineage>
</organism>
<comment type="function">
    <text evidence="1">Catalyzes the phosphorylation of D-fructose 6-phosphate to fructose 1,6-bisphosphate by ATP, the first committing step of glycolysis.</text>
</comment>
<comment type="catalytic activity">
    <reaction evidence="1">
        <text>beta-D-fructose 6-phosphate + ATP = beta-D-fructose 1,6-bisphosphate + ADP + H(+)</text>
        <dbReference type="Rhea" id="RHEA:16109"/>
        <dbReference type="ChEBI" id="CHEBI:15378"/>
        <dbReference type="ChEBI" id="CHEBI:30616"/>
        <dbReference type="ChEBI" id="CHEBI:32966"/>
        <dbReference type="ChEBI" id="CHEBI:57634"/>
        <dbReference type="ChEBI" id="CHEBI:456216"/>
        <dbReference type="EC" id="2.7.1.11"/>
    </reaction>
</comment>
<comment type="cofactor">
    <cofactor evidence="1">
        <name>Mg(2+)</name>
        <dbReference type="ChEBI" id="CHEBI:18420"/>
    </cofactor>
</comment>
<comment type="pathway">
    <text evidence="1">Carbohydrate degradation; glycolysis; D-glyceraldehyde 3-phosphate and glycerone phosphate from D-glucose: step 3/4.</text>
</comment>
<comment type="subunit">
    <text evidence="1">Homotetramer.</text>
</comment>
<comment type="subcellular location">
    <subcellularLocation>
        <location evidence="1">Cytoplasm</location>
    </subcellularLocation>
</comment>
<comment type="similarity">
    <text evidence="2">Belongs to the phosphofructokinase type A (PFKA) family.</text>
</comment>
<reference key="1">
    <citation type="journal article" date="2002" name="Nucleic Acids Res.">
        <title>The complete genomic sequence of Mycoplasma penetrans, an intracellular bacterial pathogen in humans.</title>
        <authorList>
            <person name="Sasaki Y."/>
            <person name="Ishikawa J."/>
            <person name="Yamashita A."/>
            <person name="Oshima K."/>
            <person name="Kenri T."/>
            <person name="Furuya K."/>
            <person name="Yoshino C."/>
            <person name="Horino A."/>
            <person name="Shiba T."/>
            <person name="Sasaki T."/>
            <person name="Hattori M."/>
        </authorList>
    </citation>
    <scope>NUCLEOTIDE SEQUENCE [LARGE SCALE GENOMIC DNA]</scope>
    <source>
        <strain>HF-2</strain>
    </source>
</reference>
<dbReference type="EC" id="2.7.1.11"/>
<dbReference type="EMBL" id="BA000026">
    <property type="protein sequence ID" value="BAC44382.1"/>
    <property type="molecule type" value="Genomic_DNA"/>
</dbReference>
<dbReference type="RefSeq" id="WP_011077414.1">
    <property type="nucleotide sequence ID" value="NC_004432.1"/>
</dbReference>
<dbReference type="SMR" id="Q8EVH2"/>
<dbReference type="FunCoup" id="Q8EVH2">
    <property type="interactions" value="155"/>
</dbReference>
<dbReference type="STRING" id="272633.gene:10731709"/>
<dbReference type="KEGG" id="mpe:MYPE5920"/>
<dbReference type="eggNOG" id="COG0205">
    <property type="taxonomic scope" value="Bacteria"/>
</dbReference>
<dbReference type="HOGENOM" id="CLU_020655_0_1_14"/>
<dbReference type="InParanoid" id="Q8EVH2"/>
<dbReference type="UniPathway" id="UPA00109">
    <property type="reaction ID" value="UER00182"/>
</dbReference>
<dbReference type="Proteomes" id="UP000002522">
    <property type="component" value="Chromosome"/>
</dbReference>
<dbReference type="GO" id="GO:0005945">
    <property type="term" value="C:6-phosphofructokinase complex"/>
    <property type="evidence" value="ECO:0007669"/>
    <property type="project" value="TreeGrafter"/>
</dbReference>
<dbReference type="GO" id="GO:0003872">
    <property type="term" value="F:6-phosphofructokinase activity"/>
    <property type="evidence" value="ECO:0007669"/>
    <property type="project" value="UniProtKB-EC"/>
</dbReference>
<dbReference type="GO" id="GO:0016208">
    <property type="term" value="F:AMP binding"/>
    <property type="evidence" value="ECO:0007669"/>
    <property type="project" value="TreeGrafter"/>
</dbReference>
<dbReference type="GO" id="GO:0005524">
    <property type="term" value="F:ATP binding"/>
    <property type="evidence" value="ECO:0007669"/>
    <property type="project" value="UniProtKB-KW"/>
</dbReference>
<dbReference type="GO" id="GO:0070095">
    <property type="term" value="F:fructose-6-phosphate binding"/>
    <property type="evidence" value="ECO:0007669"/>
    <property type="project" value="TreeGrafter"/>
</dbReference>
<dbReference type="GO" id="GO:0042802">
    <property type="term" value="F:identical protein binding"/>
    <property type="evidence" value="ECO:0007669"/>
    <property type="project" value="TreeGrafter"/>
</dbReference>
<dbReference type="GO" id="GO:0046872">
    <property type="term" value="F:metal ion binding"/>
    <property type="evidence" value="ECO:0007669"/>
    <property type="project" value="UniProtKB-KW"/>
</dbReference>
<dbReference type="GO" id="GO:0048029">
    <property type="term" value="F:monosaccharide binding"/>
    <property type="evidence" value="ECO:0007669"/>
    <property type="project" value="TreeGrafter"/>
</dbReference>
<dbReference type="GO" id="GO:0061621">
    <property type="term" value="P:canonical glycolysis"/>
    <property type="evidence" value="ECO:0007669"/>
    <property type="project" value="TreeGrafter"/>
</dbReference>
<dbReference type="GO" id="GO:0030388">
    <property type="term" value="P:fructose 1,6-bisphosphate metabolic process"/>
    <property type="evidence" value="ECO:0007669"/>
    <property type="project" value="TreeGrafter"/>
</dbReference>
<dbReference type="GO" id="GO:0006002">
    <property type="term" value="P:fructose 6-phosphate metabolic process"/>
    <property type="evidence" value="ECO:0007669"/>
    <property type="project" value="InterPro"/>
</dbReference>
<dbReference type="Gene3D" id="3.40.50.450">
    <property type="match status" value="1"/>
</dbReference>
<dbReference type="Gene3D" id="3.40.50.460">
    <property type="entry name" value="Phosphofructokinase domain"/>
    <property type="match status" value="1"/>
</dbReference>
<dbReference type="InterPro" id="IPR022953">
    <property type="entry name" value="ATP_PFK"/>
</dbReference>
<dbReference type="InterPro" id="IPR012003">
    <property type="entry name" value="ATP_PFK_prok-type"/>
</dbReference>
<dbReference type="InterPro" id="IPR000023">
    <property type="entry name" value="Phosphofructokinase_dom"/>
</dbReference>
<dbReference type="InterPro" id="IPR035966">
    <property type="entry name" value="PKF_sf"/>
</dbReference>
<dbReference type="NCBIfam" id="NF002872">
    <property type="entry name" value="PRK03202.1"/>
    <property type="match status" value="1"/>
</dbReference>
<dbReference type="PANTHER" id="PTHR13697:SF4">
    <property type="entry name" value="ATP-DEPENDENT 6-PHOSPHOFRUCTOKINASE"/>
    <property type="match status" value="1"/>
</dbReference>
<dbReference type="PANTHER" id="PTHR13697">
    <property type="entry name" value="PHOSPHOFRUCTOKINASE"/>
    <property type="match status" value="1"/>
</dbReference>
<dbReference type="Pfam" id="PF00365">
    <property type="entry name" value="PFK"/>
    <property type="match status" value="1"/>
</dbReference>
<dbReference type="PIRSF" id="PIRSF000532">
    <property type="entry name" value="ATP_PFK_prok"/>
    <property type="match status" value="1"/>
</dbReference>
<dbReference type="PRINTS" id="PR00476">
    <property type="entry name" value="PHFRCTKINASE"/>
</dbReference>
<dbReference type="SUPFAM" id="SSF53784">
    <property type="entry name" value="Phosphofructokinase"/>
    <property type="match status" value="1"/>
</dbReference>
<protein>
    <recommendedName>
        <fullName>Probable ATP-dependent 6-phosphofructokinase</fullName>
        <shortName>ATP-PFK</shortName>
        <shortName>Phosphofructokinase</shortName>
        <ecNumber>2.7.1.11</ecNumber>
    </recommendedName>
    <alternativeName>
        <fullName>Phosphohexokinase</fullName>
    </alternativeName>
</protein>
<keyword id="KW-0067">ATP-binding</keyword>
<keyword id="KW-0963">Cytoplasm</keyword>
<keyword id="KW-0324">Glycolysis</keyword>
<keyword id="KW-0418">Kinase</keyword>
<keyword id="KW-0460">Magnesium</keyword>
<keyword id="KW-0479">Metal-binding</keyword>
<keyword id="KW-0547">Nucleotide-binding</keyword>
<keyword id="KW-1185">Reference proteome</keyword>
<keyword id="KW-0808">Transferase</keyword>
<proteinExistence type="inferred from homology"/>
<name>PFKA_MALP2</name>
<evidence type="ECO:0000250" key="1">
    <source>
        <dbReference type="UniProtKB" id="P0A796"/>
    </source>
</evidence>
<evidence type="ECO:0000305" key="2"/>